<protein>
    <recommendedName>
        <fullName evidence="1">Large ribosomal subunit protein bL27</fullName>
    </recommendedName>
    <alternativeName>
        <fullName evidence="3">50S ribosomal protein L27</fullName>
    </alternativeName>
</protein>
<accession>A1TYY3</accession>
<comment type="similarity">
    <text evidence="1">Belongs to the bacterial ribosomal protein bL27 family.</text>
</comment>
<dbReference type="EMBL" id="CP000514">
    <property type="protein sequence ID" value="ABM17952.1"/>
    <property type="molecule type" value="Genomic_DNA"/>
</dbReference>
<dbReference type="RefSeq" id="WP_011784374.1">
    <property type="nucleotide sequence ID" value="NC_008740.1"/>
</dbReference>
<dbReference type="SMR" id="A1TYY3"/>
<dbReference type="STRING" id="351348.Maqu_0856"/>
<dbReference type="GeneID" id="31820232"/>
<dbReference type="KEGG" id="maq:Maqu_0856"/>
<dbReference type="eggNOG" id="COG0211">
    <property type="taxonomic scope" value="Bacteria"/>
</dbReference>
<dbReference type="HOGENOM" id="CLU_095424_4_1_6"/>
<dbReference type="OrthoDB" id="9803474at2"/>
<dbReference type="Proteomes" id="UP000000998">
    <property type="component" value="Chromosome"/>
</dbReference>
<dbReference type="GO" id="GO:0022625">
    <property type="term" value="C:cytosolic large ribosomal subunit"/>
    <property type="evidence" value="ECO:0007669"/>
    <property type="project" value="TreeGrafter"/>
</dbReference>
<dbReference type="GO" id="GO:0003735">
    <property type="term" value="F:structural constituent of ribosome"/>
    <property type="evidence" value="ECO:0007669"/>
    <property type="project" value="InterPro"/>
</dbReference>
<dbReference type="GO" id="GO:0006412">
    <property type="term" value="P:translation"/>
    <property type="evidence" value="ECO:0007669"/>
    <property type="project" value="UniProtKB-UniRule"/>
</dbReference>
<dbReference type="FunFam" id="2.40.50.100:FF:000001">
    <property type="entry name" value="50S ribosomal protein L27"/>
    <property type="match status" value="1"/>
</dbReference>
<dbReference type="Gene3D" id="2.40.50.100">
    <property type="match status" value="1"/>
</dbReference>
<dbReference type="HAMAP" id="MF_00539">
    <property type="entry name" value="Ribosomal_bL27"/>
    <property type="match status" value="1"/>
</dbReference>
<dbReference type="InterPro" id="IPR001684">
    <property type="entry name" value="Ribosomal_bL27"/>
</dbReference>
<dbReference type="InterPro" id="IPR018261">
    <property type="entry name" value="Ribosomal_bL27_CS"/>
</dbReference>
<dbReference type="NCBIfam" id="TIGR00062">
    <property type="entry name" value="L27"/>
    <property type="match status" value="1"/>
</dbReference>
<dbReference type="PANTHER" id="PTHR15893:SF0">
    <property type="entry name" value="LARGE RIBOSOMAL SUBUNIT PROTEIN BL27M"/>
    <property type="match status" value="1"/>
</dbReference>
<dbReference type="PANTHER" id="PTHR15893">
    <property type="entry name" value="RIBOSOMAL PROTEIN L27"/>
    <property type="match status" value="1"/>
</dbReference>
<dbReference type="Pfam" id="PF01016">
    <property type="entry name" value="Ribosomal_L27"/>
    <property type="match status" value="1"/>
</dbReference>
<dbReference type="PRINTS" id="PR00063">
    <property type="entry name" value="RIBOSOMALL27"/>
</dbReference>
<dbReference type="SUPFAM" id="SSF110324">
    <property type="entry name" value="Ribosomal L27 protein-like"/>
    <property type="match status" value="1"/>
</dbReference>
<dbReference type="PROSITE" id="PS00831">
    <property type="entry name" value="RIBOSOMAL_L27"/>
    <property type="match status" value="1"/>
</dbReference>
<evidence type="ECO:0000255" key="1">
    <source>
        <dbReference type="HAMAP-Rule" id="MF_00539"/>
    </source>
</evidence>
<evidence type="ECO:0000256" key="2">
    <source>
        <dbReference type="SAM" id="MobiDB-lite"/>
    </source>
</evidence>
<evidence type="ECO:0000305" key="3"/>
<name>RL27_MARN8</name>
<keyword id="KW-0687">Ribonucleoprotein</keyword>
<keyword id="KW-0689">Ribosomal protein</keyword>
<gene>
    <name evidence="1" type="primary">rpmA</name>
    <name type="ordered locus">Maqu_0856</name>
</gene>
<organism>
    <name type="scientific">Marinobacter nauticus (strain ATCC 700491 / DSM 11845 / VT8)</name>
    <name type="common">Marinobacter aquaeolei</name>
    <dbReference type="NCBI Taxonomy" id="351348"/>
    <lineage>
        <taxon>Bacteria</taxon>
        <taxon>Pseudomonadati</taxon>
        <taxon>Pseudomonadota</taxon>
        <taxon>Gammaproteobacteria</taxon>
        <taxon>Pseudomonadales</taxon>
        <taxon>Marinobacteraceae</taxon>
        <taxon>Marinobacter</taxon>
    </lineage>
</organism>
<proteinExistence type="inferred from homology"/>
<feature type="chain" id="PRO_1000017511" description="Large ribosomal subunit protein bL27">
    <location>
        <begin position="1"/>
        <end position="86"/>
    </location>
</feature>
<feature type="region of interest" description="Disordered" evidence="2">
    <location>
        <begin position="1"/>
        <end position="26"/>
    </location>
</feature>
<sequence>MAHKKAAGSTRNGRDSESKRLGVKRYGGESVSAGSIIVRQRGTRFHAGSNVGIGKDHTLFAKAEGQVKFETKGPQNRKFVSIVPAA</sequence>
<reference key="1">
    <citation type="journal article" date="2011" name="Appl. Environ. Microbiol.">
        <title>Genomic potential of Marinobacter aquaeolei, a biogeochemical 'opportunitroph'.</title>
        <authorList>
            <person name="Singer E."/>
            <person name="Webb E.A."/>
            <person name="Nelson W.C."/>
            <person name="Heidelberg J.F."/>
            <person name="Ivanova N."/>
            <person name="Pati A."/>
            <person name="Edwards K.J."/>
        </authorList>
    </citation>
    <scope>NUCLEOTIDE SEQUENCE [LARGE SCALE GENOMIC DNA]</scope>
    <source>
        <strain>ATCC 700491 / DSM 11845 / VT8</strain>
    </source>
</reference>